<evidence type="ECO:0000255" key="1"/>
<evidence type="ECO:0000255" key="2">
    <source>
        <dbReference type="PROSITE-ProRule" id="PRU00521"/>
    </source>
</evidence>
<evidence type="ECO:0000305" key="3"/>
<evidence type="ECO:0000312" key="4">
    <source>
        <dbReference type="HGNC" id="HGNC:8258"/>
    </source>
</evidence>
<keyword id="KW-1003">Cell membrane</keyword>
<keyword id="KW-1015">Disulfide bond</keyword>
<keyword id="KW-0297">G-protein coupled receptor</keyword>
<keyword id="KW-0472">Membrane</keyword>
<keyword id="KW-0552">Olfaction</keyword>
<keyword id="KW-0675">Receptor</keyword>
<keyword id="KW-1185">Reference proteome</keyword>
<keyword id="KW-0716">Sensory transduction</keyword>
<keyword id="KW-0807">Transducer</keyword>
<keyword id="KW-0812">Transmembrane</keyword>
<keyword id="KW-1133">Transmembrane helix</keyword>
<gene>
    <name evidence="4" type="primary">OR2I1</name>
    <name type="synonym">OR2I1P</name>
    <name type="synonym">OR2I2P</name>
    <name type="synonym">OR2I3P</name>
    <name type="synonym">OR2I4P</name>
</gene>
<proteinExistence type="uncertain"/>
<dbReference type="EMBL" id="AB065686">
    <property type="protein sequence ID" value="BAC05909.1"/>
    <property type="molecule type" value="Genomic_DNA"/>
</dbReference>
<dbReference type="EMBL" id="AL645936">
    <property type="status" value="NOT_ANNOTATED_CDS"/>
    <property type="molecule type" value="Genomic_DNA"/>
</dbReference>
<dbReference type="EMBL" id="AL662860">
    <property type="status" value="NOT_ANNOTATED_CDS"/>
    <property type="molecule type" value="Genomic_DNA"/>
</dbReference>
<dbReference type="CCDS" id="CCDS93877.1"/>
<dbReference type="RefSeq" id="NP_001382987.1">
    <property type="nucleotide sequence ID" value="NM_001396058.1"/>
</dbReference>
<dbReference type="SMR" id="Q8NGU4"/>
<dbReference type="FunCoup" id="Q8NGU4">
    <property type="interactions" value="355"/>
</dbReference>
<dbReference type="STRING" id="9606.ENSP00000493715"/>
<dbReference type="GlyGen" id="Q8NGU4">
    <property type="glycosylation" value="1 site"/>
</dbReference>
<dbReference type="iPTMnet" id="Q8NGU4"/>
<dbReference type="PhosphoSitePlus" id="Q8NGU4"/>
<dbReference type="BioMuta" id="HGNC:8258"/>
<dbReference type="DMDM" id="38372773"/>
<dbReference type="PeptideAtlas" id="Q8NGU4"/>
<dbReference type="ProteomicsDB" id="73605"/>
<dbReference type="Ensembl" id="ENST00000641137.2">
    <property type="protein sequence ID" value="ENSP00000493715.1"/>
    <property type="gene ID" value="ENSG00000237988.6"/>
</dbReference>
<dbReference type="GeneID" id="442197"/>
<dbReference type="MANE-Select" id="ENST00000641137.2">
    <property type="protein sequence ID" value="ENSP00000493715.1"/>
    <property type="RefSeq nucleotide sequence ID" value="NM_001396058.1"/>
    <property type="RefSeq protein sequence ID" value="NP_001382987.1"/>
</dbReference>
<dbReference type="AGR" id="HGNC:8258"/>
<dbReference type="GeneCards" id="OR2I1"/>
<dbReference type="HGNC" id="HGNC:8258">
    <property type="gene designation" value="OR2I1"/>
</dbReference>
<dbReference type="neXtProt" id="NX_Q8NGU4"/>
<dbReference type="OpenTargets" id="ENSG00000237988"/>
<dbReference type="VEuPathDB" id="HostDB:ENSG00000237988"/>
<dbReference type="GeneTree" id="ENSGT01130000278266"/>
<dbReference type="InParanoid" id="Q8NGU4"/>
<dbReference type="OMA" id="DSTERQM"/>
<dbReference type="OrthoDB" id="9446037at2759"/>
<dbReference type="PAN-GO" id="Q8NGU4">
    <property type="GO annotations" value="0 GO annotations based on evolutionary models"/>
</dbReference>
<dbReference type="PhylomeDB" id="Q8NGU4"/>
<dbReference type="PathwayCommons" id="Q8NGU4"/>
<dbReference type="Reactome" id="R-HSA-9752946">
    <property type="pathway name" value="Expression and translocation of olfactory receptors"/>
</dbReference>
<dbReference type="Pharos" id="Q8NGU4">
    <property type="development level" value="Tdark"/>
</dbReference>
<dbReference type="Proteomes" id="UP000005640">
    <property type="component" value="Chromosome 6"/>
</dbReference>
<dbReference type="RNAct" id="Q8NGU4">
    <property type="molecule type" value="protein"/>
</dbReference>
<dbReference type="Bgee" id="ENSG00000237988">
    <property type="expression patterns" value="Expressed in vermiform appendix and 70 other cell types or tissues"/>
</dbReference>
<dbReference type="GO" id="GO:0005886">
    <property type="term" value="C:plasma membrane"/>
    <property type="evidence" value="ECO:0000318"/>
    <property type="project" value="GO_Central"/>
</dbReference>
<dbReference type="GO" id="GO:0004930">
    <property type="term" value="F:G protein-coupled receptor activity"/>
    <property type="evidence" value="ECO:0007669"/>
    <property type="project" value="UniProtKB-KW"/>
</dbReference>
<dbReference type="GO" id="GO:0004984">
    <property type="term" value="F:olfactory receptor activity"/>
    <property type="evidence" value="ECO:0000318"/>
    <property type="project" value="GO_Central"/>
</dbReference>
<dbReference type="GO" id="GO:0050911">
    <property type="term" value="P:detection of chemical stimulus involved in sensory perception of smell"/>
    <property type="evidence" value="ECO:0000318"/>
    <property type="project" value="GO_Central"/>
</dbReference>
<dbReference type="CDD" id="cd15433">
    <property type="entry name" value="7tmA_OR2Y-like"/>
    <property type="match status" value="1"/>
</dbReference>
<dbReference type="FunFam" id="1.20.1070.10:FF:000268">
    <property type="entry name" value="Putative olfactory receptor 2I1"/>
    <property type="match status" value="1"/>
</dbReference>
<dbReference type="Gene3D" id="1.20.1070.10">
    <property type="entry name" value="Rhodopsin 7-helix transmembrane proteins"/>
    <property type="match status" value="1"/>
</dbReference>
<dbReference type="InterPro" id="IPR000276">
    <property type="entry name" value="GPCR_Rhodpsn"/>
</dbReference>
<dbReference type="InterPro" id="IPR017452">
    <property type="entry name" value="GPCR_Rhodpsn_7TM"/>
</dbReference>
<dbReference type="InterPro" id="IPR000725">
    <property type="entry name" value="Olfact_rcpt"/>
</dbReference>
<dbReference type="PANTHER" id="PTHR26453">
    <property type="entry name" value="OLFACTORY RECEPTOR"/>
    <property type="match status" value="1"/>
</dbReference>
<dbReference type="Pfam" id="PF13853">
    <property type="entry name" value="7tm_4"/>
    <property type="match status" value="1"/>
</dbReference>
<dbReference type="PRINTS" id="PR00237">
    <property type="entry name" value="GPCRRHODOPSN"/>
</dbReference>
<dbReference type="PRINTS" id="PR00245">
    <property type="entry name" value="OLFACTORYR"/>
</dbReference>
<dbReference type="SUPFAM" id="SSF81321">
    <property type="entry name" value="Family A G protein-coupled receptor-like"/>
    <property type="match status" value="1"/>
</dbReference>
<dbReference type="PROSITE" id="PS50262">
    <property type="entry name" value="G_PROTEIN_RECEP_F1_2"/>
    <property type="match status" value="1"/>
</dbReference>
<accession>Q8NGU4</accession>
<accession>A0A2R8Y4D9</accession>
<feature type="chain" id="PRO_0000150481" description="Putative olfactory receptor 2I1">
    <location>
        <begin position="1"/>
        <end position="315"/>
    </location>
</feature>
<feature type="topological domain" description="Extracellular" evidence="1">
    <location>
        <begin position="1"/>
        <end position="24"/>
    </location>
</feature>
<feature type="transmembrane region" description="Helical; Name=1" evidence="1">
    <location>
        <begin position="25"/>
        <end position="48"/>
    </location>
</feature>
<feature type="topological domain" description="Cytoplasmic" evidence="1">
    <location>
        <begin position="49"/>
        <end position="56"/>
    </location>
</feature>
<feature type="transmembrane region" description="Helical; Name=2" evidence="1">
    <location>
        <begin position="57"/>
        <end position="78"/>
    </location>
</feature>
<feature type="topological domain" description="Extracellular" evidence="1">
    <location>
        <begin position="79"/>
        <end position="99"/>
    </location>
</feature>
<feature type="transmembrane region" description="Helical; Name=3" evidence="1">
    <location>
        <begin position="100"/>
        <end position="119"/>
    </location>
</feature>
<feature type="topological domain" description="Cytoplasmic" evidence="1">
    <location>
        <begin position="120"/>
        <end position="138"/>
    </location>
</feature>
<feature type="transmembrane region" description="Helical; Name=4" evidence="1">
    <location>
        <begin position="139"/>
        <end position="157"/>
    </location>
</feature>
<feature type="topological domain" description="Extracellular" evidence="1">
    <location>
        <begin position="158"/>
        <end position="195"/>
    </location>
</feature>
<feature type="transmembrane region" description="Helical; Name=5" evidence="1">
    <location>
        <begin position="196"/>
        <end position="219"/>
    </location>
</feature>
<feature type="topological domain" description="Cytoplasmic" evidence="1">
    <location>
        <begin position="220"/>
        <end position="236"/>
    </location>
</feature>
<feature type="transmembrane region" description="Helical; Name=6" evidence="1">
    <location>
        <begin position="237"/>
        <end position="259"/>
    </location>
</feature>
<feature type="topological domain" description="Extracellular" evidence="1">
    <location>
        <begin position="260"/>
        <end position="272"/>
    </location>
</feature>
<feature type="transmembrane region" description="Helical; Name=7" evidence="1">
    <location>
        <begin position="273"/>
        <end position="292"/>
    </location>
</feature>
<feature type="topological domain" description="Cytoplasmic" evidence="1">
    <location>
        <begin position="293"/>
        <end position="315"/>
    </location>
</feature>
<feature type="disulfide bond" evidence="2">
    <location>
        <begin position="96"/>
        <end position="188"/>
    </location>
</feature>
<feature type="sequence conflict" description="In Ref. 1; BAC05909." evidence="3" ref="1">
    <original>MKANY</original>
    <variation>MLANQA</variation>
    <location>
        <begin position="1"/>
        <end position="5"/>
    </location>
</feature>
<protein>
    <recommendedName>
        <fullName>Putative olfactory receptor 2I1</fullName>
    </recommendedName>
    <alternativeName>
        <fullName>Putative olfactory receptor 2I2</fullName>
    </alternativeName>
    <alternativeName>
        <fullName>Putative olfactory receptor 2I3</fullName>
    </alternativeName>
    <alternativeName>
        <fullName>Putative olfactory receptor 2I4</fullName>
    </alternativeName>
</protein>
<sequence length="315" mass="34094">MKANYSAEERFLLLGFSDWPSLQPVLFALVLLCYLLTLTGNSALVLLAVRDPRLHTPMYYFLCHLALVDAGFTTSVVPPLLANLRGPALWLPRSHCTAQLCASLALGSAECVLLAVMALDRAAAVCRPLRYAGLVSPRLCRTLASASWLSGLTNSVAQTALLAERPLCAPRLLDHFICELPALLKLACGGDGDTTENQMFAARVVILLLPFAVILASYGAVARAVCCMRFSGGRRRAVGTCGSHLTAVCLFYGSAIYTYLQPAQRYNQARGKFVSLFYTVVTPALNPLIYTLRNKKVKGAARRLLRSLGRGQAGQ</sequence>
<name>OR2I1_HUMAN</name>
<comment type="function">
    <text evidence="3">Odorant receptor.</text>
</comment>
<comment type="subcellular location">
    <subcellularLocation>
        <location evidence="3">Cell membrane</location>
        <topology evidence="1">Multi-pass membrane protein</topology>
    </subcellularLocation>
</comment>
<comment type="similarity">
    <text evidence="2">Belongs to the G-protein coupled receptor 1 family.</text>
</comment>
<comment type="caution">
    <text evidence="3">Could be the product of a pseudogene.</text>
</comment>
<comment type="online information" name="Human Olfactory Receptor Data Exploratorium (HORDE)">
    <link uri="http://genome.weizmann.ac.il/horde/card/index/symbol:OR2I1P"/>
</comment>
<reference key="1">
    <citation type="submission" date="2001-07" db="EMBL/GenBank/DDBJ databases">
        <title>Genome-wide discovery and analysis of human seven transmembrane helix receptor genes.</title>
        <authorList>
            <person name="Suwa M."/>
            <person name="Sato T."/>
            <person name="Okouchi I."/>
            <person name="Arita M."/>
            <person name="Futami K."/>
            <person name="Matsumoto S."/>
            <person name="Tsutsumi S."/>
            <person name="Aburatani H."/>
            <person name="Asai K."/>
            <person name="Akiyama Y."/>
        </authorList>
    </citation>
    <scope>NUCLEOTIDE SEQUENCE [GENOMIC DNA]</scope>
</reference>
<reference key="2">
    <citation type="journal article" date="2003" name="Nature">
        <title>The DNA sequence and analysis of human chromosome 6.</title>
        <authorList>
            <person name="Mungall A.J."/>
            <person name="Palmer S.A."/>
            <person name="Sims S.K."/>
            <person name="Edwards C.A."/>
            <person name="Ashurst J.L."/>
            <person name="Wilming L."/>
            <person name="Jones M.C."/>
            <person name="Horton R."/>
            <person name="Hunt S.E."/>
            <person name="Scott C.E."/>
            <person name="Gilbert J.G.R."/>
            <person name="Clamp M.E."/>
            <person name="Bethel G."/>
            <person name="Milne S."/>
            <person name="Ainscough R."/>
            <person name="Almeida J.P."/>
            <person name="Ambrose K.D."/>
            <person name="Andrews T.D."/>
            <person name="Ashwell R.I.S."/>
            <person name="Babbage A.K."/>
            <person name="Bagguley C.L."/>
            <person name="Bailey J."/>
            <person name="Banerjee R."/>
            <person name="Barker D.J."/>
            <person name="Barlow K.F."/>
            <person name="Bates K."/>
            <person name="Beare D.M."/>
            <person name="Beasley H."/>
            <person name="Beasley O."/>
            <person name="Bird C.P."/>
            <person name="Blakey S.E."/>
            <person name="Bray-Allen S."/>
            <person name="Brook J."/>
            <person name="Brown A.J."/>
            <person name="Brown J.Y."/>
            <person name="Burford D.C."/>
            <person name="Burrill W."/>
            <person name="Burton J."/>
            <person name="Carder C."/>
            <person name="Carter N.P."/>
            <person name="Chapman J.C."/>
            <person name="Clark S.Y."/>
            <person name="Clark G."/>
            <person name="Clee C.M."/>
            <person name="Clegg S."/>
            <person name="Cobley V."/>
            <person name="Collier R.E."/>
            <person name="Collins J.E."/>
            <person name="Colman L.K."/>
            <person name="Corby N.R."/>
            <person name="Coville G.J."/>
            <person name="Culley K.M."/>
            <person name="Dhami P."/>
            <person name="Davies J."/>
            <person name="Dunn M."/>
            <person name="Earthrowl M.E."/>
            <person name="Ellington A.E."/>
            <person name="Evans K.A."/>
            <person name="Faulkner L."/>
            <person name="Francis M.D."/>
            <person name="Frankish A."/>
            <person name="Frankland J."/>
            <person name="French L."/>
            <person name="Garner P."/>
            <person name="Garnett J."/>
            <person name="Ghori M.J."/>
            <person name="Gilby L.M."/>
            <person name="Gillson C.J."/>
            <person name="Glithero R.J."/>
            <person name="Grafham D.V."/>
            <person name="Grant M."/>
            <person name="Gribble S."/>
            <person name="Griffiths C."/>
            <person name="Griffiths M.N.D."/>
            <person name="Hall R."/>
            <person name="Halls K.S."/>
            <person name="Hammond S."/>
            <person name="Harley J.L."/>
            <person name="Hart E.A."/>
            <person name="Heath P.D."/>
            <person name="Heathcott R."/>
            <person name="Holmes S.J."/>
            <person name="Howden P.J."/>
            <person name="Howe K.L."/>
            <person name="Howell G.R."/>
            <person name="Huckle E."/>
            <person name="Humphray S.J."/>
            <person name="Humphries M.D."/>
            <person name="Hunt A.R."/>
            <person name="Johnson C.M."/>
            <person name="Joy A.A."/>
            <person name="Kay M."/>
            <person name="Keenan S.J."/>
            <person name="Kimberley A.M."/>
            <person name="King A."/>
            <person name="Laird G.K."/>
            <person name="Langford C."/>
            <person name="Lawlor S."/>
            <person name="Leongamornlert D.A."/>
            <person name="Leversha M."/>
            <person name="Lloyd C.R."/>
            <person name="Lloyd D.M."/>
            <person name="Loveland J.E."/>
            <person name="Lovell J."/>
            <person name="Martin S."/>
            <person name="Mashreghi-Mohammadi M."/>
            <person name="Maslen G.L."/>
            <person name="Matthews L."/>
            <person name="McCann O.T."/>
            <person name="McLaren S.J."/>
            <person name="McLay K."/>
            <person name="McMurray A."/>
            <person name="Moore M.J.F."/>
            <person name="Mullikin J.C."/>
            <person name="Niblett D."/>
            <person name="Nickerson T."/>
            <person name="Novik K.L."/>
            <person name="Oliver K."/>
            <person name="Overton-Larty E.K."/>
            <person name="Parker A."/>
            <person name="Patel R."/>
            <person name="Pearce A.V."/>
            <person name="Peck A.I."/>
            <person name="Phillimore B.J.C.T."/>
            <person name="Phillips S."/>
            <person name="Plumb R.W."/>
            <person name="Porter K.M."/>
            <person name="Ramsey Y."/>
            <person name="Ranby S.A."/>
            <person name="Rice C.M."/>
            <person name="Ross M.T."/>
            <person name="Searle S.M."/>
            <person name="Sehra H.K."/>
            <person name="Sheridan E."/>
            <person name="Skuce C.D."/>
            <person name="Smith S."/>
            <person name="Smith M."/>
            <person name="Spraggon L."/>
            <person name="Squares S.L."/>
            <person name="Steward C.A."/>
            <person name="Sycamore N."/>
            <person name="Tamlyn-Hall G."/>
            <person name="Tester J."/>
            <person name="Theaker A.J."/>
            <person name="Thomas D.W."/>
            <person name="Thorpe A."/>
            <person name="Tracey A."/>
            <person name="Tromans A."/>
            <person name="Tubby B."/>
            <person name="Wall M."/>
            <person name="Wallis J.M."/>
            <person name="West A.P."/>
            <person name="White S.S."/>
            <person name="Whitehead S.L."/>
            <person name="Whittaker H."/>
            <person name="Wild A."/>
            <person name="Willey D.J."/>
            <person name="Wilmer T.E."/>
            <person name="Wood J.M."/>
            <person name="Wray P.W."/>
            <person name="Wyatt J.C."/>
            <person name="Young L."/>
            <person name="Younger R.M."/>
            <person name="Bentley D.R."/>
            <person name="Coulson A."/>
            <person name="Durbin R.M."/>
            <person name="Hubbard T."/>
            <person name="Sulston J.E."/>
            <person name="Dunham I."/>
            <person name="Rogers J."/>
            <person name="Beck S."/>
        </authorList>
    </citation>
    <scope>NUCLEOTIDE SEQUENCE [LARGE SCALE GENOMIC DNA]</scope>
</reference>
<organism>
    <name type="scientific">Homo sapiens</name>
    <name type="common">Human</name>
    <dbReference type="NCBI Taxonomy" id="9606"/>
    <lineage>
        <taxon>Eukaryota</taxon>
        <taxon>Metazoa</taxon>
        <taxon>Chordata</taxon>
        <taxon>Craniata</taxon>
        <taxon>Vertebrata</taxon>
        <taxon>Euteleostomi</taxon>
        <taxon>Mammalia</taxon>
        <taxon>Eutheria</taxon>
        <taxon>Euarchontoglires</taxon>
        <taxon>Primates</taxon>
        <taxon>Haplorrhini</taxon>
        <taxon>Catarrhini</taxon>
        <taxon>Hominidae</taxon>
        <taxon>Homo</taxon>
    </lineage>
</organism>